<feature type="chain" id="PRO_1000077675" description="GTPase Der">
    <location>
        <begin position="1"/>
        <end position="488"/>
    </location>
</feature>
<feature type="domain" description="EngA-type G 1">
    <location>
        <begin position="3"/>
        <end position="166"/>
    </location>
</feature>
<feature type="domain" description="EngA-type G 2">
    <location>
        <begin position="200"/>
        <end position="373"/>
    </location>
</feature>
<feature type="domain" description="KH-like" evidence="1">
    <location>
        <begin position="374"/>
        <end position="458"/>
    </location>
</feature>
<feature type="region of interest" description="Disordered" evidence="2">
    <location>
        <begin position="168"/>
        <end position="191"/>
    </location>
</feature>
<feature type="compositionally biased region" description="Acidic residues" evidence="2">
    <location>
        <begin position="172"/>
        <end position="189"/>
    </location>
</feature>
<feature type="binding site" evidence="1">
    <location>
        <begin position="9"/>
        <end position="16"/>
    </location>
    <ligand>
        <name>GTP</name>
        <dbReference type="ChEBI" id="CHEBI:37565"/>
        <label>1</label>
    </ligand>
</feature>
<feature type="binding site" evidence="1">
    <location>
        <begin position="56"/>
        <end position="60"/>
    </location>
    <ligand>
        <name>GTP</name>
        <dbReference type="ChEBI" id="CHEBI:37565"/>
        <label>1</label>
    </ligand>
</feature>
<feature type="binding site" evidence="1">
    <location>
        <begin position="118"/>
        <end position="121"/>
    </location>
    <ligand>
        <name>GTP</name>
        <dbReference type="ChEBI" id="CHEBI:37565"/>
        <label>1</label>
    </ligand>
</feature>
<feature type="binding site" evidence="1">
    <location>
        <begin position="206"/>
        <end position="213"/>
    </location>
    <ligand>
        <name>GTP</name>
        <dbReference type="ChEBI" id="CHEBI:37565"/>
        <label>2</label>
    </ligand>
</feature>
<feature type="binding site" evidence="1">
    <location>
        <begin position="253"/>
        <end position="257"/>
    </location>
    <ligand>
        <name>GTP</name>
        <dbReference type="ChEBI" id="CHEBI:37565"/>
        <label>2</label>
    </ligand>
</feature>
<feature type="binding site" evidence="1">
    <location>
        <begin position="318"/>
        <end position="321"/>
    </location>
    <ligand>
        <name>GTP</name>
        <dbReference type="ChEBI" id="CHEBI:37565"/>
        <label>2</label>
    </ligand>
</feature>
<comment type="function">
    <text evidence="1">GTPase that plays an essential role in the late steps of ribosome biogenesis.</text>
</comment>
<comment type="subunit">
    <text evidence="1">Associates with the 50S ribosomal subunit.</text>
</comment>
<comment type="similarity">
    <text evidence="1">Belongs to the TRAFAC class TrmE-Era-EngA-EngB-Septin-like GTPase superfamily. EngA (Der) GTPase family.</text>
</comment>
<gene>
    <name evidence="1" type="primary">der</name>
    <name type="synonym">engA</name>
    <name type="ordered locus">Ssed_1436</name>
</gene>
<proteinExistence type="inferred from homology"/>
<organism>
    <name type="scientific">Shewanella sediminis (strain HAW-EB3)</name>
    <dbReference type="NCBI Taxonomy" id="425104"/>
    <lineage>
        <taxon>Bacteria</taxon>
        <taxon>Pseudomonadati</taxon>
        <taxon>Pseudomonadota</taxon>
        <taxon>Gammaproteobacteria</taxon>
        <taxon>Alteromonadales</taxon>
        <taxon>Shewanellaceae</taxon>
        <taxon>Shewanella</taxon>
    </lineage>
</organism>
<name>DER_SHESH</name>
<evidence type="ECO:0000255" key="1">
    <source>
        <dbReference type="HAMAP-Rule" id="MF_00195"/>
    </source>
</evidence>
<evidence type="ECO:0000256" key="2">
    <source>
        <dbReference type="SAM" id="MobiDB-lite"/>
    </source>
</evidence>
<protein>
    <recommendedName>
        <fullName evidence="1">GTPase Der</fullName>
    </recommendedName>
    <alternativeName>
        <fullName evidence="1">GTP-binding protein EngA</fullName>
    </alternativeName>
</protein>
<sequence length="488" mass="54687">MIPVVALVGRPNVGKSTLFNRLTRTRDALVADFPGLTRDRKYGRAFLSGYEFIVVDTGGIDGTEEGIETHMAEQSLAAIEEADVVLFLTDARAGLTAADQAICEHLRRREKTTFVVANKVDGIDADSACAEFWALGLGEVYQMAAAQGRGVTNMIEYALAPYAEALGLNRDGDEDEDEEEREYSEEEAEAEQKRLQDLPIKMAIIGKPNVGKSTLTNRILGEERVVVYDSPGTTRDSIYIPMERDGREYVMIDTAGVRRRSKVHETVEKFSVIKTLKAVEDCNVVLLIIDAREGIAEQDLGLLGFALNAGRALVIAVNKWDGIDQDIKDRVKSELDRRLGFIDFARIHFISALHGTGVGHLFESVQEAYDSATRRVSTSMLTRIMQMAQDDHQPPLVNGRRVKLKYAHAGGYNPPIVVVHGNQVKKLPDSYKRFMMNYYRRSLKVMGTPIQIRFQDSANPFEGMNTKKLTVSQERRRKRMMTHIKDKK</sequence>
<dbReference type="EMBL" id="CP000821">
    <property type="protein sequence ID" value="ABV36047.1"/>
    <property type="molecule type" value="Genomic_DNA"/>
</dbReference>
<dbReference type="RefSeq" id="WP_012141783.1">
    <property type="nucleotide sequence ID" value="NC_009831.1"/>
</dbReference>
<dbReference type="SMR" id="A8FT74"/>
<dbReference type="STRING" id="425104.Ssed_1436"/>
<dbReference type="KEGG" id="sse:Ssed_1436"/>
<dbReference type="eggNOG" id="COG1160">
    <property type="taxonomic scope" value="Bacteria"/>
</dbReference>
<dbReference type="HOGENOM" id="CLU_016077_6_2_6"/>
<dbReference type="OrthoDB" id="9805918at2"/>
<dbReference type="Proteomes" id="UP000002015">
    <property type="component" value="Chromosome"/>
</dbReference>
<dbReference type="GO" id="GO:0005525">
    <property type="term" value="F:GTP binding"/>
    <property type="evidence" value="ECO:0007669"/>
    <property type="project" value="UniProtKB-UniRule"/>
</dbReference>
<dbReference type="GO" id="GO:0043022">
    <property type="term" value="F:ribosome binding"/>
    <property type="evidence" value="ECO:0007669"/>
    <property type="project" value="TreeGrafter"/>
</dbReference>
<dbReference type="GO" id="GO:0042254">
    <property type="term" value="P:ribosome biogenesis"/>
    <property type="evidence" value="ECO:0007669"/>
    <property type="project" value="UniProtKB-KW"/>
</dbReference>
<dbReference type="CDD" id="cd01894">
    <property type="entry name" value="EngA1"/>
    <property type="match status" value="1"/>
</dbReference>
<dbReference type="CDD" id="cd01895">
    <property type="entry name" value="EngA2"/>
    <property type="match status" value="1"/>
</dbReference>
<dbReference type="FunFam" id="3.30.300.20:FF:000004">
    <property type="entry name" value="GTPase Der"/>
    <property type="match status" value="1"/>
</dbReference>
<dbReference type="FunFam" id="3.40.50.300:FF:000040">
    <property type="entry name" value="GTPase Der"/>
    <property type="match status" value="1"/>
</dbReference>
<dbReference type="FunFam" id="3.40.50.300:FF:000057">
    <property type="entry name" value="GTPase Der"/>
    <property type="match status" value="1"/>
</dbReference>
<dbReference type="Gene3D" id="3.30.300.20">
    <property type="match status" value="1"/>
</dbReference>
<dbReference type="Gene3D" id="3.40.50.300">
    <property type="entry name" value="P-loop containing nucleotide triphosphate hydrolases"/>
    <property type="match status" value="2"/>
</dbReference>
<dbReference type="HAMAP" id="MF_00195">
    <property type="entry name" value="GTPase_Der"/>
    <property type="match status" value="1"/>
</dbReference>
<dbReference type="InterPro" id="IPR031166">
    <property type="entry name" value="G_ENGA"/>
</dbReference>
<dbReference type="InterPro" id="IPR006073">
    <property type="entry name" value="GTP-bd"/>
</dbReference>
<dbReference type="InterPro" id="IPR016484">
    <property type="entry name" value="GTPase_Der"/>
</dbReference>
<dbReference type="InterPro" id="IPR032859">
    <property type="entry name" value="KH_dom-like"/>
</dbReference>
<dbReference type="InterPro" id="IPR015946">
    <property type="entry name" value="KH_dom-like_a/b"/>
</dbReference>
<dbReference type="InterPro" id="IPR027417">
    <property type="entry name" value="P-loop_NTPase"/>
</dbReference>
<dbReference type="InterPro" id="IPR005225">
    <property type="entry name" value="Small_GTP-bd"/>
</dbReference>
<dbReference type="NCBIfam" id="TIGR03594">
    <property type="entry name" value="GTPase_EngA"/>
    <property type="match status" value="1"/>
</dbReference>
<dbReference type="NCBIfam" id="TIGR00231">
    <property type="entry name" value="small_GTP"/>
    <property type="match status" value="2"/>
</dbReference>
<dbReference type="PANTHER" id="PTHR43834">
    <property type="entry name" value="GTPASE DER"/>
    <property type="match status" value="1"/>
</dbReference>
<dbReference type="PANTHER" id="PTHR43834:SF6">
    <property type="entry name" value="GTPASE DER"/>
    <property type="match status" value="1"/>
</dbReference>
<dbReference type="Pfam" id="PF14714">
    <property type="entry name" value="KH_dom-like"/>
    <property type="match status" value="1"/>
</dbReference>
<dbReference type="Pfam" id="PF01926">
    <property type="entry name" value="MMR_HSR1"/>
    <property type="match status" value="2"/>
</dbReference>
<dbReference type="PIRSF" id="PIRSF006485">
    <property type="entry name" value="GTP-binding_EngA"/>
    <property type="match status" value="1"/>
</dbReference>
<dbReference type="PRINTS" id="PR00326">
    <property type="entry name" value="GTP1OBG"/>
</dbReference>
<dbReference type="SUPFAM" id="SSF52540">
    <property type="entry name" value="P-loop containing nucleoside triphosphate hydrolases"/>
    <property type="match status" value="2"/>
</dbReference>
<dbReference type="PROSITE" id="PS51712">
    <property type="entry name" value="G_ENGA"/>
    <property type="match status" value="2"/>
</dbReference>
<accession>A8FT74</accession>
<reference key="1">
    <citation type="submission" date="2007-08" db="EMBL/GenBank/DDBJ databases">
        <title>Complete sequence of Shewanella sediminis HAW-EB3.</title>
        <authorList>
            <consortium name="US DOE Joint Genome Institute"/>
            <person name="Copeland A."/>
            <person name="Lucas S."/>
            <person name="Lapidus A."/>
            <person name="Barry K."/>
            <person name="Glavina del Rio T."/>
            <person name="Dalin E."/>
            <person name="Tice H."/>
            <person name="Pitluck S."/>
            <person name="Chertkov O."/>
            <person name="Brettin T."/>
            <person name="Bruce D."/>
            <person name="Detter J.C."/>
            <person name="Han C."/>
            <person name="Schmutz J."/>
            <person name="Larimer F."/>
            <person name="Land M."/>
            <person name="Hauser L."/>
            <person name="Kyrpides N."/>
            <person name="Kim E."/>
            <person name="Zhao J.-S."/>
            <person name="Richardson P."/>
        </authorList>
    </citation>
    <scope>NUCLEOTIDE SEQUENCE [LARGE SCALE GENOMIC DNA]</scope>
    <source>
        <strain>HAW-EB3</strain>
    </source>
</reference>
<keyword id="KW-0342">GTP-binding</keyword>
<keyword id="KW-0547">Nucleotide-binding</keyword>
<keyword id="KW-1185">Reference proteome</keyword>
<keyword id="KW-0677">Repeat</keyword>
<keyword id="KW-0690">Ribosome biogenesis</keyword>